<protein>
    <recommendedName>
        <fullName evidence="1">Large ribosomal subunit protein bL9</fullName>
    </recommendedName>
    <alternativeName>
        <fullName evidence="2">50S ribosomal protein L9</fullName>
    </alternativeName>
</protein>
<name>RL9_SYNC1</name>
<accession>Q3A320</accession>
<reference key="1">
    <citation type="submission" date="2005-10" db="EMBL/GenBank/DDBJ databases">
        <title>Complete sequence of Pelobacter carbinolicus DSM 2380.</title>
        <authorList>
            <person name="Copeland A."/>
            <person name="Lucas S."/>
            <person name="Lapidus A."/>
            <person name="Barry K."/>
            <person name="Detter J.C."/>
            <person name="Glavina T."/>
            <person name="Hammon N."/>
            <person name="Israni S."/>
            <person name="Pitluck S."/>
            <person name="Chertkov O."/>
            <person name="Schmutz J."/>
            <person name="Larimer F."/>
            <person name="Land M."/>
            <person name="Kyrpides N."/>
            <person name="Ivanova N."/>
            <person name="Richardson P."/>
        </authorList>
    </citation>
    <scope>NUCLEOTIDE SEQUENCE [LARGE SCALE GENOMIC DNA]</scope>
    <source>
        <strain>DSM 2380 / NBRC 103641 / GraBd1</strain>
    </source>
</reference>
<evidence type="ECO:0000255" key="1">
    <source>
        <dbReference type="HAMAP-Rule" id="MF_00503"/>
    </source>
</evidence>
<evidence type="ECO:0000305" key="2"/>
<keyword id="KW-1185">Reference proteome</keyword>
<keyword id="KW-0687">Ribonucleoprotein</keyword>
<keyword id="KW-0689">Ribosomal protein</keyword>
<keyword id="KW-0694">RNA-binding</keyword>
<keyword id="KW-0699">rRNA-binding</keyword>
<dbReference type="EMBL" id="CP000142">
    <property type="protein sequence ID" value="ABA89237.1"/>
    <property type="molecule type" value="Genomic_DNA"/>
</dbReference>
<dbReference type="RefSeq" id="WP_011341747.1">
    <property type="nucleotide sequence ID" value="NC_007498.2"/>
</dbReference>
<dbReference type="SMR" id="Q3A320"/>
<dbReference type="STRING" id="338963.Pcar_1996"/>
<dbReference type="KEGG" id="pca:Pcar_1996"/>
<dbReference type="eggNOG" id="COG0359">
    <property type="taxonomic scope" value="Bacteria"/>
</dbReference>
<dbReference type="HOGENOM" id="CLU_078938_3_0_7"/>
<dbReference type="OrthoDB" id="9788336at2"/>
<dbReference type="Proteomes" id="UP000002534">
    <property type="component" value="Chromosome"/>
</dbReference>
<dbReference type="GO" id="GO:1990904">
    <property type="term" value="C:ribonucleoprotein complex"/>
    <property type="evidence" value="ECO:0007669"/>
    <property type="project" value="UniProtKB-KW"/>
</dbReference>
<dbReference type="GO" id="GO:0005840">
    <property type="term" value="C:ribosome"/>
    <property type="evidence" value="ECO:0007669"/>
    <property type="project" value="UniProtKB-KW"/>
</dbReference>
<dbReference type="GO" id="GO:0019843">
    <property type="term" value="F:rRNA binding"/>
    <property type="evidence" value="ECO:0007669"/>
    <property type="project" value="UniProtKB-UniRule"/>
</dbReference>
<dbReference type="GO" id="GO:0003735">
    <property type="term" value="F:structural constituent of ribosome"/>
    <property type="evidence" value="ECO:0007669"/>
    <property type="project" value="InterPro"/>
</dbReference>
<dbReference type="GO" id="GO:0006412">
    <property type="term" value="P:translation"/>
    <property type="evidence" value="ECO:0007669"/>
    <property type="project" value="UniProtKB-UniRule"/>
</dbReference>
<dbReference type="FunFam" id="3.40.5.10:FF:000003">
    <property type="entry name" value="50S ribosomal protein L9"/>
    <property type="match status" value="1"/>
</dbReference>
<dbReference type="Gene3D" id="3.10.430.100">
    <property type="entry name" value="Ribosomal protein L9, C-terminal domain"/>
    <property type="match status" value="1"/>
</dbReference>
<dbReference type="Gene3D" id="3.40.5.10">
    <property type="entry name" value="Ribosomal protein L9, N-terminal domain"/>
    <property type="match status" value="1"/>
</dbReference>
<dbReference type="HAMAP" id="MF_00503">
    <property type="entry name" value="Ribosomal_bL9"/>
    <property type="match status" value="1"/>
</dbReference>
<dbReference type="InterPro" id="IPR000244">
    <property type="entry name" value="Ribosomal_bL9"/>
</dbReference>
<dbReference type="InterPro" id="IPR009027">
    <property type="entry name" value="Ribosomal_bL9/RNase_H1_N"/>
</dbReference>
<dbReference type="InterPro" id="IPR020594">
    <property type="entry name" value="Ribosomal_bL9_bac/chp"/>
</dbReference>
<dbReference type="InterPro" id="IPR020069">
    <property type="entry name" value="Ribosomal_bL9_C"/>
</dbReference>
<dbReference type="InterPro" id="IPR036791">
    <property type="entry name" value="Ribosomal_bL9_C_sf"/>
</dbReference>
<dbReference type="InterPro" id="IPR020070">
    <property type="entry name" value="Ribosomal_bL9_N"/>
</dbReference>
<dbReference type="InterPro" id="IPR036935">
    <property type="entry name" value="Ribosomal_bL9_N_sf"/>
</dbReference>
<dbReference type="NCBIfam" id="TIGR00158">
    <property type="entry name" value="L9"/>
    <property type="match status" value="1"/>
</dbReference>
<dbReference type="PANTHER" id="PTHR21368">
    <property type="entry name" value="50S RIBOSOMAL PROTEIN L9"/>
    <property type="match status" value="1"/>
</dbReference>
<dbReference type="Pfam" id="PF03948">
    <property type="entry name" value="Ribosomal_L9_C"/>
    <property type="match status" value="1"/>
</dbReference>
<dbReference type="Pfam" id="PF01281">
    <property type="entry name" value="Ribosomal_L9_N"/>
    <property type="match status" value="1"/>
</dbReference>
<dbReference type="SUPFAM" id="SSF55658">
    <property type="entry name" value="L9 N-domain-like"/>
    <property type="match status" value="1"/>
</dbReference>
<dbReference type="SUPFAM" id="SSF55653">
    <property type="entry name" value="Ribosomal protein L9 C-domain"/>
    <property type="match status" value="1"/>
</dbReference>
<dbReference type="PROSITE" id="PS00651">
    <property type="entry name" value="RIBOSOMAL_L9"/>
    <property type="match status" value="1"/>
</dbReference>
<comment type="function">
    <text evidence="1">Binds to the 23S rRNA.</text>
</comment>
<comment type="similarity">
    <text evidence="1">Belongs to the bacterial ribosomal protein bL9 family.</text>
</comment>
<feature type="chain" id="PRO_0000236559" description="Large ribosomal subunit protein bL9">
    <location>
        <begin position="1"/>
        <end position="148"/>
    </location>
</feature>
<sequence length="148" mass="16239">MDIILMENVDGLGQIGDLVKVKPGYARNFLIPQKFAVEANTRNIKELEHQKRQLEHKAQKVLQASEVVKAQIEKVTCEFALRAGDDGKLFGSVTSMEIQAKLAESGVEVDRKKIQLDEPIKALGEYEVAVKLPAGILATVKVAVTALD</sequence>
<gene>
    <name evidence="1" type="primary">rplI</name>
    <name type="ordered locus">Pcar_1996</name>
</gene>
<proteinExistence type="inferred from homology"/>
<organism>
    <name type="scientific">Syntrophotalea carbinolica (strain DSM 2380 / NBRC 103641 / GraBd1)</name>
    <name type="common">Pelobacter carbinolicus</name>
    <dbReference type="NCBI Taxonomy" id="338963"/>
    <lineage>
        <taxon>Bacteria</taxon>
        <taxon>Pseudomonadati</taxon>
        <taxon>Thermodesulfobacteriota</taxon>
        <taxon>Desulfuromonadia</taxon>
        <taxon>Desulfuromonadales</taxon>
        <taxon>Syntrophotaleaceae</taxon>
        <taxon>Syntrophotalea</taxon>
    </lineage>
</organism>